<accession>O52720</accession>
<comment type="catalytic activity">
    <reaction>
        <text>D-arabinitol + NAD(+) = D-xylulose + NADH + H(+)</text>
        <dbReference type="Rhea" id="RHEA:17921"/>
        <dbReference type="ChEBI" id="CHEBI:15378"/>
        <dbReference type="ChEBI" id="CHEBI:17140"/>
        <dbReference type="ChEBI" id="CHEBI:18333"/>
        <dbReference type="ChEBI" id="CHEBI:57540"/>
        <dbReference type="ChEBI" id="CHEBI:57945"/>
        <dbReference type="EC" id="1.1.1.11"/>
    </reaction>
</comment>
<comment type="pathway">
    <text>Carbohydrate metabolism; D-arabinitol metabolism.</text>
</comment>
<comment type="subunit">
    <text>Monomer.</text>
</comment>
<comment type="similarity">
    <text evidence="1">Belongs to the mannitol dehydrogenase family.</text>
</comment>
<name>DALD_KLEPN</name>
<dbReference type="EC" id="1.1.1.11"/>
<dbReference type="EMBL" id="AF045245">
    <property type="protein sequence ID" value="AAC26498.1"/>
    <property type="molecule type" value="Genomic_DNA"/>
</dbReference>
<dbReference type="RefSeq" id="WP_064161503.1">
    <property type="nucleotide sequence ID" value="NZ_CAYAFA010000002.1"/>
</dbReference>
<dbReference type="SMR" id="O52720"/>
<dbReference type="UniPathway" id="UPA00380"/>
<dbReference type="GO" id="GO:0047813">
    <property type="term" value="F:D-arabinitol 4-dehydrogenase activity"/>
    <property type="evidence" value="ECO:0007669"/>
    <property type="project" value="UniProtKB-EC"/>
</dbReference>
<dbReference type="GO" id="GO:0008866">
    <property type="term" value="F:fructuronate reductase activity"/>
    <property type="evidence" value="ECO:0007669"/>
    <property type="project" value="TreeGrafter"/>
</dbReference>
<dbReference type="GO" id="GO:0051161">
    <property type="term" value="P:arabitol metabolic process"/>
    <property type="evidence" value="ECO:0007669"/>
    <property type="project" value="UniProtKB-UniPathway"/>
</dbReference>
<dbReference type="GO" id="GO:0042840">
    <property type="term" value="P:D-glucuronate catabolic process"/>
    <property type="evidence" value="ECO:0007669"/>
    <property type="project" value="TreeGrafter"/>
</dbReference>
<dbReference type="Gene3D" id="1.10.1040.10">
    <property type="entry name" value="N-(1-d-carboxylethyl)-l-norvaline Dehydrogenase, domain 2"/>
    <property type="match status" value="1"/>
</dbReference>
<dbReference type="Gene3D" id="3.40.50.720">
    <property type="entry name" value="NAD(P)-binding Rossmann-like Domain"/>
    <property type="match status" value="1"/>
</dbReference>
<dbReference type="InterPro" id="IPR008927">
    <property type="entry name" value="6-PGluconate_DH-like_C_sf"/>
</dbReference>
<dbReference type="InterPro" id="IPR013328">
    <property type="entry name" value="6PGD_dom2"/>
</dbReference>
<dbReference type="InterPro" id="IPR050025">
    <property type="entry name" value="DalD"/>
</dbReference>
<dbReference type="InterPro" id="IPR000669">
    <property type="entry name" value="Mannitol_DH"/>
</dbReference>
<dbReference type="InterPro" id="IPR050988">
    <property type="entry name" value="Mannitol_DH/Oxidoreductase"/>
</dbReference>
<dbReference type="InterPro" id="IPR013118">
    <property type="entry name" value="Mannitol_DH_C"/>
</dbReference>
<dbReference type="InterPro" id="IPR013131">
    <property type="entry name" value="Mannitol_DH_N"/>
</dbReference>
<dbReference type="InterPro" id="IPR036291">
    <property type="entry name" value="NAD(P)-bd_dom_sf"/>
</dbReference>
<dbReference type="NCBIfam" id="NF043014">
    <property type="entry name" value="DArabDhDalD"/>
    <property type="match status" value="1"/>
</dbReference>
<dbReference type="PANTHER" id="PTHR43362:SF7">
    <property type="entry name" value="D-MANNONATE OXIDOREDUCTASE"/>
    <property type="match status" value="1"/>
</dbReference>
<dbReference type="PANTHER" id="PTHR43362">
    <property type="entry name" value="MANNITOL DEHYDROGENASE DSF1-RELATED"/>
    <property type="match status" value="1"/>
</dbReference>
<dbReference type="Pfam" id="PF01232">
    <property type="entry name" value="Mannitol_dh"/>
    <property type="match status" value="1"/>
</dbReference>
<dbReference type="Pfam" id="PF08125">
    <property type="entry name" value="Mannitol_dh_C"/>
    <property type="match status" value="1"/>
</dbReference>
<dbReference type="PRINTS" id="PR00084">
    <property type="entry name" value="MTLDHDRGNASE"/>
</dbReference>
<dbReference type="SUPFAM" id="SSF48179">
    <property type="entry name" value="6-phosphogluconate dehydrogenase C-terminal domain-like"/>
    <property type="match status" value="1"/>
</dbReference>
<dbReference type="SUPFAM" id="SSF51735">
    <property type="entry name" value="NAD(P)-binding Rossmann-fold domains"/>
    <property type="match status" value="1"/>
</dbReference>
<proteinExistence type="inferred from homology"/>
<feature type="chain" id="PRO_0000170735" description="D-arabinitol 4-dehydrogenase">
    <location>
        <begin position="1"/>
        <end position="455"/>
    </location>
</feature>
<evidence type="ECO:0000305" key="1"/>
<organism>
    <name type="scientific">Klebsiella pneumoniae</name>
    <dbReference type="NCBI Taxonomy" id="573"/>
    <lineage>
        <taxon>Bacteria</taxon>
        <taxon>Pseudomonadati</taxon>
        <taxon>Pseudomonadota</taxon>
        <taxon>Gammaproteobacteria</taxon>
        <taxon>Enterobacterales</taxon>
        <taxon>Enterobacteriaceae</taxon>
        <taxon>Klebsiella/Raoultella group</taxon>
        <taxon>Klebsiella</taxon>
        <taxon>Klebsiella pneumoniae complex</taxon>
    </lineage>
</organism>
<reference key="1">
    <citation type="journal article" date="1998" name="Microbiology">
        <title>Genes for D-arabinitol and ribitol catabolism from Klebsiella pneumoniae.</title>
        <authorList>
            <person name="Heuel H."/>
            <person name="Shakeri-Garakani A."/>
            <person name="Turgut S."/>
            <person name="Lengeler J.W."/>
        </authorList>
    </citation>
    <scope>NUCLEOTIDE SEQUENCE [GENOMIC DNA]</scope>
    <source>
        <strain>1033-5P14 / KAY2026</strain>
    </source>
</reference>
<gene>
    <name type="primary">dalD</name>
</gene>
<sequence length="455" mass="51022">MNNQFTWLHIGLGSFHRAHQAWYLHRLIASGDNRWRIAAGNIRNDAEQVVQALAAQGGRYVLETVSPEGEREYEEITSIQKLLPWQAGLQPLINEGANPQTKVIAFTVTEGGYYLNTRHRLETSNPDLQADLQGECKTIYGTLARILEKRMADNAGPLTLLNCDNVRHNGERFHDGMVEFLQLTGKQAVIDWMAANTTCPNTMVDRITPRPAADLPARIKAQAGIDDKAPVMGETFIQWVVENNFRDVRPNLEAVGVEMVESVIPYEEAKIRILNASHSCIAWAGTLIGQQYIHESTLTDVIYAIADRYVTEDVIPCLGDNGIDLPTYRDVVLKRFTNPYIQDTNQRVAADGFSKIPAMIAPTLQECYQRGVRPEATAMLPALFFVFMEQWHKGTLPYQYQDGILDAQAVHEMFEAQDPVAVFARDKALFGDLANNADFLALMREKVAAVYTLIN</sequence>
<protein>
    <recommendedName>
        <fullName>D-arabinitol 4-dehydrogenase</fullName>
        <ecNumber>1.1.1.11</ecNumber>
    </recommendedName>
</protein>
<keyword id="KW-0520">NAD</keyword>
<keyword id="KW-0560">Oxidoreductase</keyword>